<comment type="catalytic activity">
    <reaction evidence="1">
        <text>(2R)-3-phosphoglycerate + ATP = (2R)-3-phospho-glyceroyl phosphate + ADP</text>
        <dbReference type="Rhea" id="RHEA:14801"/>
        <dbReference type="ChEBI" id="CHEBI:30616"/>
        <dbReference type="ChEBI" id="CHEBI:57604"/>
        <dbReference type="ChEBI" id="CHEBI:58272"/>
        <dbReference type="ChEBI" id="CHEBI:456216"/>
        <dbReference type="EC" id="2.7.2.3"/>
    </reaction>
</comment>
<comment type="pathway">
    <text evidence="1">Carbohydrate degradation; glycolysis; pyruvate from D-glyceraldehyde 3-phosphate: step 2/5.</text>
</comment>
<comment type="subunit">
    <text evidence="1">Monomer.</text>
</comment>
<comment type="subcellular location">
    <subcellularLocation>
        <location evidence="1">Cytoplasm</location>
    </subcellularLocation>
</comment>
<comment type="similarity">
    <text evidence="1">Belongs to the phosphoglycerate kinase family.</text>
</comment>
<keyword id="KW-0067">ATP-binding</keyword>
<keyword id="KW-0963">Cytoplasm</keyword>
<keyword id="KW-0324">Glycolysis</keyword>
<keyword id="KW-0418">Kinase</keyword>
<keyword id="KW-0547">Nucleotide-binding</keyword>
<keyword id="KW-0808">Transferase</keyword>
<name>PGK_RUTMC</name>
<organism>
    <name type="scientific">Ruthia magnifica subsp. Calyptogena magnifica</name>
    <dbReference type="NCBI Taxonomy" id="413404"/>
    <lineage>
        <taxon>Bacteria</taxon>
        <taxon>Pseudomonadati</taxon>
        <taxon>Pseudomonadota</taxon>
        <taxon>Gammaproteobacteria</taxon>
        <taxon>Candidatus Pseudothioglobaceae</taxon>
        <taxon>Candidatus Ruthturnera</taxon>
    </lineage>
</organism>
<evidence type="ECO:0000255" key="1">
    <source>
        <dbReference type="HAMAP-Rule" id="MF_00145"/>
    </source>
</evidence>
<dbReference type="EC" id="2.7.2.3" evidence="1"/>
<dbReference type="EMBL" id="CP000488">
    <property type="protein sequence ID" value="ABL01865.1"/>
    <property type="molecule type" value="Genomic_DNA"/>
</dbReference>
<dbReference type="RefSeq" id="WP_011737491.1">
    <property type="nucleotide sequence ID" value="NC_008610.1"/>
</dbReference>
<dbReference type="SMR" id="A1AVA8"/>
<dbReference type="STRING" id="413404.Rmag_0065"/>
<dbReference type="KEGG" id="rma:Rmag_0065"/>
<dbReference type="eggNOG" id="COG0126">
    <property type="taxonomic scope" value="Bacteria"/>
</dbReference>
<dbReference type="HOGENOM" id="CLU_025427_0_2_6"/>
<dbReference type="OrthoDB" id="9808460at2"/>
<dbReference type="UniPathway" id="UPA00109">
    <property type="reaction ID" value="UER00185"/>
</dbReference>
<dbReference type="Proteomes" id="UP000002587">
    <property type="component" value="Chromosome"/>
</dbReference>
<dbReference type="GO" id="GO:0005829">
    <property type="term" value="C:cytosol"/>
    <property type="evidence" value="ECO:0007669"/>
    <property type="project" value="TreeGrafter"/>
</dbReference>
<dbReference type="GO" id="GO:0043531">
    <property type="term" value="F:ADP binding"/>
    <property type="evidence" value="ECO:0007669"/>
    <property type="project" value="TreeGrafter"/>
</dbReference>
<dbReference type="GO" id="GO:0005524">
    <property type="term" value="F:ATP binding"/>
    <property type="evidence" value="ECO:0007669"/>
    <property type="project" value="UniProtKB-KW"/>
</dbReference>
<dbReference type="GO" id="GO:0004618">
    <property type="term" value="F:phosphoglycerate kinase activity"/>
    <property type="evidence" value="ECO:0007669"/>
    <property type="project" value="UniProtKB-UniRule"/>
</dbReference>
<dbReference type="GO" id="GO:0006094">
    <property type="term" value="P:gluconeogenesis"/>
    <property type="evidence" value="ECO:0007669"/>
    <property type="project" value="TreeGrafter"/>
</dbReference>
<dbReference type="GO" id="GO:0006096">
    <property type="term" value="P:glycolytic process"/>
    <property type="evidence" value="ECO:0007669"/>
    <property type="project" value="UniProtKB-UniRule"/>
</dbReference>
<dbReference type="FunFam" id="3.40.50.1260:FF:000001">
    <property type="entry name" value="Phosphoglycerate kinase"/>
    <property type="match status" value="1"/>
</dbReference>
<dbReference type="FunFam" id="3.40.50.1260:FF:000002">
    <property type="entry name" value="Phosphoglycerate kinase"/>
    <property type="match status" value="1"/>
</dbReference>
<dbReference type="Gene3D" id="3.40.50.1260">
    <property type="entry name" value="Phosphoglycerate kinase, N-terminal domain"/>
    <property type="match status" value="2"/>
</dbReference>
<dbReference type="HAMAP" id="MF_00145">
    <property type="entry name" value="Phosphoglyc_kinase"/>
    <property type="match status" value="1"/>
</dbReference>
<dbReference type="InterPro" id="IPR001576">
    <property type="entry name" value="Phosphoglycerate_kinase"/>
</dbReference>
<dbReference type="InterPro" id="IPR015824">
    <property type="entry name" value="Phosphoglycerate_kinase_N"/>
</dbReference>
<dbReference type="InterPro" id="IPR036043">
    <property type="entry name" value="Phosphoglycerate_kinase_sf"/>
</dbReference>
<dbReference type="PANTHER" id="PTHR11406">
    <property type="entry name" value="PHOSPHOGLYCERATE KINASE"/>
    <property type="match status" value="1"/>
</dbReference>
<dbReference type="PANTHER" id="PTHR11406:SF23">
    <property type="entry name" value="PHOSPHOGLYCERATE KINASE 1, CHLOROPLASTIC-RELATED"/>
    <property type="match status" value="1"/>
</dbReference>
<dbReference type="Pfam" id="PF00162">
    <property type="entry name" value="PGK"/>
    <property type="match status" value="1"/>
</dbReference>
<dbReference type="PIRSF" id="PIRSF000724">
    <property type="entry name" value="Pgk"/>
    <property type="match status" value="1"/>
</dbReference>
<dbReference type="PRINTS" id="PR00477">
    <property type="entry name" value="PHGLYCKINASE"/>
</dbReference>
<dbReference type="SUPFAM" id="SSF53748">
    <property type="entry name" value="Phosphoglycerate kinase"/>
    <property type="match status" value="1"/>
</dbReference>
<proteinExistence type="inferred from homology"/>
<gene>
    <name evidence="1" type="primary">pgk</name>
    <name type="ordered locus">Rmag_0065</name>
</gene>
<feature type="chain" id="PRO_1000058050" description="Phosphoglycerate kinase">
    <location>
        <begin position="1"/>
        <end position="391"/>
    </location>
</feature>
<feature type="binding site" evidence="1">
    <location>
        <begin position="21"/>
        <end position="23"/>
    </location>
    <ligand>
        <name>substrate</name>
    </ligand>
</feature>
<feature type="binding site" evidence="1">
    <location>
        <position position="36"/>
    </location>
    <ligand>
        <name>substrate</name>
    </ligand>
</feature>
<feature type="binding site" evidence="1">
    <location>
        <begin position="59"/>
        <end position="62"/>
    </location>
    <ligand>
        <name>substrate</name>
    </ligand>
</feature>
<feature type="binding site" evidence="1">
    <location>
        <position position="113"/>
    </location>
    <ligand>
        <name>substrate</name>
    </ligand>
</feature>
<feature type="binding site" evidence="1">
    <location>
        <position position="146"/>
    </location>
    <ligand>
        <name>substrate</name>
    </ligand>
</feature>
<feature type="binding site" evidence="1">
    <location>
        <position position="197"/>
    </location>
    <ligand>
        <name>ATP</name>
        <dbReference type="ChEBI" id="CHEBI:30616"/>
    </ligand>
</feature>
<feature type="binding site" evidence="1">
    <location>
        <position position="314"/>
    </location>
    <ligand>
        <name>ATP</name>
        <dbReference type="ChEBI" id="CHEBI:30616"/>
    </ligand>
</feature>
<feature type="binding site" evidence="1">
    <location>
        <begin position="340"/>
        <end position="343"/>
    </location>
    <ligand>
        <name>ATP</name>
        <dbReference type="ChEBI" id="CHEBI:30616"/>
    </ligand>
</feature>
<sequence length="391" mass="41912">MSVINLLDLDLSSKRVLIRQDLNVSISNWIVTSDKRIKASLPTIKIALKQGAKVMLMSHRGRPIEGEPSDEFSLQPVADRLSELLNTTVRLEKDWLNGVQMNNGEVVLCENVRFNAGEMANDDNLSKRMALMCDIFVMDAFGTAHRAQASTHGVAKYAPIACSGPLLSGELDALGKVLDNPKRPMVAIVGGSKVSTKLTVLESLSKIVDQLVVGGGIANTFIAAQGFNVGKSLCEHDLIPMAKKLMEDCEIPVPTDVVCGKEFSETAEAQTKASTEVSDDDMIFDIGPESIKQLAKIMENAGTIVWNGPVGVFEFEQFASGTKTLGKAIAESDAFSIAGGGDTLAAVDKYGIEDKINYISTGGGAFLEFLEGKILPAVEILEQRASGVDFA</sequence>
<protein>
    <recommendedName>
        <fullName evidence="1">Phosphoglycerate kinase</fullName>
        <ecNumber evidence="1">2.7.2.3</ecNumber>
    </recommendedName>
</protein>
<reference key="1">
    <citation type="journal article" date="2007" name="Science">
        <title>The Calyptogena magnifica chemoautotrophic symbiont genome.</title>
        <authorList>
            <person name="Newton I.L.G."/>
            <person name="Woyke T."/>
            <person name="Auchtung T.A."/>
            <person name="Dilly G.F."/>
            <person name="Dutton R.J."/>
            <person name="Fisher M.C."/>
            <person name="Fontanez K.M."/>
            <person name="Lau E."/>
            <person name="Stewart F.J."/>
            <person name="Richardson P.M."/>
            <person name="Barry K.W."/>
            <person name="Saunders E."/>
            <person name="Detter J.C."/>
            <person name="Wu D."/>
            <person name="Eisen J.A."/>
            <person name="Cavanaugh C.M."/>
        </authorList>
    </citation>
    <scope>NUCLEOTIDE SEQUENCE [LARGE SCALE GENOMIC DNA]</scope>
</reference>
<accession>A1AVA8</accession>